<reference key="1">
    <citation type="submission" date="2008-05" db="EMBL/GenBank/DDBJ databases">
        <title>Complete sequence of chromosome 1 of Ralstonia pickettii 12J.</title>
        <authorList>
            <person name="Lucas S."/>
            <person name="Copeland A."/>
            <person name="Lapidus A."/>
            <person name="Glavina del Rio T."/>
            <person name="Dalin E."/>
            <person name="Tice H."/>
            <person name="Bruce D."/>
            <person name="Goodwin L."/>
            <person name="Pitluck S."/>
            <person name="Meincke L."/>
            <person name="Brettin T."/>
            <person name="Detter J.C."/>
            <person name="Han C."/>
            <person name="Kuske C.R."/>
            <person name="Schmutz J."/>
            <person name="Larimer F."/>
            <person name="Land M."/>
            <person name="Hauser L."/>
            <person name="Kyrpides N."/>
            <person name="Mikhailova N."/>
            <person name="Marsh T."/>
            <person name="Richardson P."/>
        </authorList>
    </citation>
    <scope>NUCLEOTIDE SEQUENCE [LARGE SCALE GENOMIC DNA]</scope>
    <source>
        <strain>12J</strain>
    </source>
</reference>
<keyword id="KW-0067">ATP-binding</keyword>
<keyword id="KW-0143">Chaperone</keyword>
<keyword id="KW-0547">Nucleotide-binding</keyword>
<feature type="chain" id="PRO_1000131685" description="Chaperone protein HscA homolog">
    <location>
        <begin position="1"/>
        <end position="621"/>
    </location>
</feature>
<sequence>MALLQISEPGESPAPHQRRLAVGIDLGTTNSLVASVRSSVPEVLPDDQGRPLLPSVVRYLPTGGAHIGYKAQAEAVRDPKNTIISVKRFMGRGLKDVAHIENTPYDFVDAPGMVQLKTVAGVKSPVEVSAEILATLRQRAEDTLGDELVGAVITVPAYFDDAQRQATKDAAKLAGLNVLRLLNEPTAAAIAYGLDNGSEGIYAVYDLGGGTFDISVLKLTKGVFEVMSTGGDSALGGDDFDQRIVCWVVEQAGLQPLSAEDTRLLLNKARAAKEWLSTADSTEIDAMLSTGETVHLVLTAETFAELTATLVQKTLSPVRRALRDAGVTVEDVKGVVLVGGATRMPIIRRAVGQLFGQTPLTNLDPDQVVAIGAAMQANLLAGNRAPGEDWLLLDVIPLSLGVETMGGLVEKIIPRNSTIPVARAQEFTTFKDGQTAMAIHVLQGERELASDCRSLARFELRGIPPMVAGAARIRVTYQVDADGLLSVSARETVSGVEASIAVKPSYGLGDDDVARMLQEGFQSAEDDMRRRALAEERVEGERLLEALSQALAADGDLLSPEERAAIDTEIAALRTTMQGEDHRAIKDAVDALSHGTDEFAARRMDRGIRKALAGKRIEELG</sequence>
<accession>B2U8U5</accession>
<organism>
    <name type="scientific">Ralstonia pickettii (strain 12J)</name>
    <dbReference type="NCBI Taxonomy" id="402626"/>
    <lineage>
        <taxon>Bacteria</taxon>
        <taxon>Pseudomonadati</taxon>
        <taxon>Pseudomonadota</taxon>
        <taxon>Betaproteobacteria</taxon>
        <taxon>Burkholderiales</taxon>
        <taxon>Burkholderiaceae</taxon>
        <taxon>Ralstonia</taxon>
    </lineage>
</organism>
<proteinExistence type="inferred from homology"/>
<gene>
    <name evidence="1" type="primary">hscA</name>
    <name type="ordered locus">Rpic_0889</name>
</gene>
<protein>
    <recommendedName>
        <fullName evidence="1">Chaperone protein HscA homolog</fullName>
    </recommendedName>
</protein>
<comment type="function">
    <text evidence="1">Chaperone involved in the maturation of iron-sulfur cluster-containing proteins. Has a low intrinsic ATPase activity which is markedly stimulated by HscB.</text>
</comment>
<comment type="similarity">
    <text evidence="1">Belongs to the heat shock protein 70 family.</text>
</comment>
<dbReference type="EMBL" id="CP001068">
    <property type="protein sequence ID" value="ACD26039.1"/>
    <property type="molecule type" value="Genomic_DNA"/>
</dbReference>
<dbReference type="SMR" id="B2U8U5"/>
<dbReference type="STRING" id="402626.Rpic_0889"/>
<dbReference type="KEGG" id="rpi:Rpic_0889"/>
<dbReference type="PATRIC" id="fig|402626.5.peg.2088"/>
<dbReference type="eggNOG" id="COG0443">
    <property type="taxonomic scope" value="Bacteria"/>
</dbReference>
<dbReference type="HOGENOM" id="CLU_005965_2_1_4"/>
<dbReference type="GO" id="GO:0005524">
    <property type="term" value="F:ATP binding"/>
    <property type="evidence" value="ECO:0007669"/>
    <property type="project" value="UniProtKB-KW"/>
</dbReference>
<dbReference type="GO" id="GO:0016887">
    <property type="term" value="F:ATP hydrolysis activity"/>
    <property type="evidence" value="ECO:0007669"/>
    <property type="project" value="UniProtKB-UniRule"/>
</dbReference>
<dbReference type="GO" id="GO:0140662">
    <property type="term" value="F:ATP-dependent protein folding chaperone"/>
    <property type="evidence" value="ECO:0007669"/>
    <property type="project" value="InterPro"/>
</dbReference>
<dbReference type="GO" id="GO:0051082">
    <property type="term" value="F:unfolded protein binding"/>
    <property type="evidence" value="ECO:0007669"/>
    <property type="project" value="InterPro"/>
</dbReference>
<dbReference type="GO" id="GO:0016226">
    <property type="term" value="P:iron-sulfur cluster assembly"/>
    <property type="evidence" value="ECO:0007669"/>
    <property type="project" value="InterPro"/>
</dbReference>
<dbReference type="CDD" id="cd10236">
    <property type="entry name" value="ASKHA_NBD_HSP70_HscA"/>
    <property type="match status" value="1"/>
</dbReference>
<dbReference type="FunFam" id="3.30.420.40:FF:000046">
    <property type="entry name" value="Chaperone protein HscA"/>
    <property type="match status" value="1"/>
</dbReference>
<dbReference type="FunFam" id="2.60.34.10:FF:000005">
    <property type="entry name" value="Chaperone protein HscA homolog"/>
    <property type="match status" value="1"/>
</dbReference>
<dbReference type="Gene3D" id="1.20.1270.10">
    <property type="match status" value="1"/>
</dbReference>
<dbReference type="Gene3D" id="3.30.420.40">
    <property type="match status" value="2"/>
</dbReference>
<dbReference type="Gene3D" id="3.90.640.10">
    <property type="entry name" value="Actin, Chain A, domain 4"/>
    <property type="match status" value="1"/>
</dbReference>
<dbReference type="Gene3D" id="2.60.34.10">
    <property type="entry name" value="Substrate Binding Domain Of DNAk, Chain A, domain 1"/>
    <property type="match status" value="1"/>
</dbReference>
<dbReference type="HAMAP" id="MF_00679">
    <property type="entry name" value="HscA"/>
    <property type="match status" value="1"/>
</dbReference>
<dbReference type="InterPro" id="IPR043129">
    <property type="entry name" value="ATPase_NBD"/>
</dbReference>
<dbReference type="InterPro" id="IPR018181">
    <property type="entry name" value="Heat_shock_70_CS"/>
</dbReference>
<dbReference type="InterPro" id="IPR042039">
    <property type="entry name" value="HscA_NBD"/>
</dbReference>
<dbReference type="InterPro" id="IPR029048">
    <property type="entry name" value="HSP70_C_sf"/>
</dbReference>
<dbReference type="InterPro" id="IPR029047">
    <property type="entry name" value="HSP70_peptide-bd_sf"/>
</dbReference>
<dbReference type="InterPro" id="IPR013126">
    <property type="entry name" value="Hsp_70_fam"/>
</dbReference>
<dbReference type="InterPro" id="IPR010236">
    <property type="entry name" value="ISC_FeS_clus_asmbl_HscA"/>
</dbReference>
<dbReference type="NCBIfam" id="TIGR01991">
    <property type="entry name" value="HscA"/>
    <property type="match status" value="1"/>
</dbReference>
<dbReference type="NCBIfam" id="NF003520">
    <property type="entry name" value="PRK05183.1"/>
    <property type="match status" value="1"/>
</dbReference>
<dbReference type="PANTHER" id="PTHR19375">
    <property type="entry name" value="HEAT SHOCK PROTEIN 70KDA"/>
    <property type="match status" value="1"/>
</dbReference>
<dbReference type="Pfam" id="PF00012">
    <property type="entry name" value="HSP70"/>
    <property type="match status" value="1"/>
</dbReference>
<dbReference type="PRINTS" id="PR00301">
    <property type="entry name" value="HEATSHOCK70"/>
</dbReference>
<dbReference type="SUPFAM" id="SSF53067">
    <property type="entry name" value="Actin-like ATPase domain"/>
    <property type="match status" value="2"/>
</dbReference>
<dbReference type="SUPFAM" id="SSF100934">
    <property type="entry name" value="Heat shock protein 70kD (HSP70), C-terminal subdomain"/>
    <property type="match status" value="1"/>
</dbReference>
<dbReference type="SUPFAM" id="SSF100920">
    <property type="entry name" value="Heat shock protein 70kD (HSP70), peptide-binding domain"/>
    <property type="match status" value="1"/>
</dbReference>
<dbReference type="PROSITE" id="PS00297">
    <property type="entry name" value="HSP70_1"/>
    <property type="match status" value="1"/>
</dbReference>
<dbReference type="PROSITE" id="PS00329">
    <property type="entry name" value="HSP70_2"/>
    <property type="match status" value="1"/>
</dbReference>
<dbReference type="PROSITE" id="PS01036">
    <property type="entry name" value="HSP70_3"/>
    <property type="match status" value="1"/>
</dbReference>
<name>HSCA_RALPJ</name>
<evidence type="ECO:0000255" key="1">
    <source>
        <dbReference type="HAMAP-Rule" id="MF_00679"/>
    </source>
</evidence>